<accession>P9WGK8</accession>
<accession>L0TF19</accession>
<accession>O05890</accession>
<accession>Q50496</accession>
<gene>
    <name type="primary">mtrB</name>
    <name type="ordered locus">MT3343</name>
</gene>
<comment type="function">
    <text evidence="1">Member of the two-component regulatory system MtrA/MtrB. Probably functions as a membrane-associated protein kinase that phosphorylates MtrA in response to environmental signals. Probably plays a role in cell division (By similarity).</text>
</comment>
<comment type="catalytic activity">
    <reaction>
        <text>ATP + protein L-histidine = ADP + protein N-phospho-L-histidine.</text>
        <dbReference type="EC" id="2.7.13.3"/>
    </reaction>
</comment>
<comment type="cofactor">
    <cofactor evidence="1">
        <name>Mg(2+)</name>
        <dbReference type="ChEBI" id="CHEBI:18420"/>
    </cofactor>
    <cofactor evidence="1">
        <name>Ca(2+)</name>
        <dbReference type="ChEBI" id="CHEBI:29108"/>
    </cofactor>
    <text evidence="1">Autophosphorylates in the presence of Mg(2+) and/or Ca(2+), but only Mg(2+) ions promote phosphotransfer to MtrA.</text>
</comment>
<comment type="subunit">
    <text evidence="1">Interacts with MrtA.</text>
</comment>
<comment type="subcellular location">
    <subcellularLocation>
        <location evidence="1">Cell membrane</location>
        <topology evidence="1">Multi-pass membrane protein</topology>
    </subcellularLocation>
</comment>
<comment type="PTM">
    <text evidence="1">Autophosphorylated.</text>
</comment>
<organism>
    <name type="scientific">Mycobacterium tuberculosis (strain CDC 1551 / Oshkosh)</name>
    <dbReference type="NCBI Taxonomy" id="83331"/>
    <lineage>
        <taxon>Bacteria</taxon>
        <taxon>Bacillati</taxon>
        <taxon>Actinomycetota</taxon>
        <taxon>Actinomycetes</taxon>
        <taxon>Mycobacteriales</taxon>
        <taxon>Mycobacteriaceae</taxon>
        <taxon>Mycobacterium</taxon>
        <taxon>Mycobacterium tuberculosis complex</taxon>
    </lineage>
</organism>
<name>MTRB_MYCTO</name>
<protein>
    <recommendedName>
        <fullName>Sensor histidine kinase MtrB</fullName>
        <ecNumber>2.7.13.3</ecNumber>
    </recommendedName>
</protein>
<sequence length="567" mass="61619">MIFGSRRRIRGRRGRSGPMTRGLSALSRAVAVAWRRSLQLRVVALTLGLSLAVILALGFVLTSQVTNRVLDIKVRAAIDQIERARTTVSGIVNGEETRSLDSSLQLARNTLTSKTDPASGAGLAGAFDAVLMVPGDGPRAASTAGPVDQVPNALRGFVKAGQAAYQYATVQTEGFSGPALIIGTPTLSRVANLELYLIFPLASEQATITLVRGTMATGGLVLLVLLAGIALLVSRQVVVPVRSASRIAERFAEGHLSERMPVRGEDDMARLAVSFNDMAESLSRQIAQLEEFGNLQRRFTSDVSHELRTPLTTVRMAADLIYDHSADLDPTLRRSTELMVSELDRFETLLNDLLEISRHDAGVAELSVEAVDLRTTVNNALGNVGHLAEEAGIELLVDLPAEQVIAEVDARRVERILRNLIANAIDHAEHKPVRIRMAADEDTVAVTVRDYGVGLRPGEEKLVFSRFWRSDPSRVRRSGGTGLGLAISVEDARLHQGRLEAWGEPGEGACFRLTLPLVRGHKVTTSPLPMKPIPQPVLQPVAQPNPQPMPPEYKERQRPREHAEWSG</sequence>
<feature type="chain" id="PRO_0000428344" description="Sensor histidine kinase MtrB">
    <location>
        <begin position="1"/>
        <end position="567"/>
    </location>
</feature>
<feature type="transmembrane region" description="Helical" evidence="2">
    <location>
        <begin position="42"/>
        <end position="62"/>
    </location>
</feature>
<feature type="transmembrane region" description="Helical" evidence="2">
    <location>
        <begin position="213"/>
        <end position="233"/>
    </location>
</feature>
<feature type="domain" description="HAMP" evidence="3">
    <location>
        <begin position="235"/>
        <end position="287"/>
    </location>
</feature>
<feature type="domain" description="Histidine kinase" evidence="4">
    <location>
        <begin position="302"/>
        <end position="519"/>
    </location>
</feature>
<feature type="region of interest" description="Disordered" evidence="5">
    <location>
        <begin position="1"/>
        <end position="20"/>
    </location>
</feature>
<feature type="region of interest" description="Disordered" evidence="5">
    <location>
        <begin position="526"/>
        <end position="567"/>
    </location>
</feature>
<feature type="compositionally biased region" description="Basic residues" evidence="5">
    <location>
        <begin position="1"/>
        <end position="15"/>
    </location>
</feature>
<feature type="compositionally biased region" description="Pro residues" evidence="5">
    <location>
        <begin position="529"/>
        <end position="551"/>
    </location>
</feature>
<feature type="compositionally biased region" description="Basic and acidic residues" evidence="5">
    <location>
        <begin position="552"/>
        <end position="567"/>
    </location>
</feature>
<feature type="modified residue" description="Phosphohistidine; by autocatalysis" evidence="4">
    <location>
        <position position="305"/>
    </location>
</feature>
<evidence type="ECO:0000250" key="1"/>
<evidence type="ECO:0000255" key="2"/>
<evidence type="ECO:0000255" key="3">
    <source>
        <dbReference type="PROSITE-ProRule" id="PRU00102"/>
    </source>
</evidence>
<evidence type="ECO:0000255" key="4">
    <source>
        <dbReference type="PROSITE-ProRule" id="PRU00107"/>
    </source>
</evidence>
<evidence type="ECO:0000256" key="5">
    <source>
        <dbReference type="SAM" id="MobiDB-lite"/>
    </source>
</evidence>
<keyword id="KW-0067">ATP-binding</keyword>
<keyword id="KW-1003">Cell membrane</keyword>
<keyword id="KW-0418">Kinase</keyword>
<keyword id="KW-0472">Membrane</keyword>
<keyword id="KW-0547">Nucleotide-binding</keyword>
<keyword id="KW-0597">Phosphoprotein</keyword>
<keyword id="KW-1185">Reference proteome</keyword>
<keyword id="KW-0808">Transferase</keyword>
<keyword id="KW-0812">Transmembrane</keyword>
<keyword id="KW-1133">Transmembrane helix</keyword>
<keyword id="KW-0902">Two-component regulatory system</keyword>
<proteinExistence type="inferred from homology"/>
<dbReference type="EC" id="2.7.13.3"/>
<dbReference type="EMBL" id="AE000516">
    <property type="protein sequence ID" value="AAK47685.1"/>
    <property type="molecule type" value="Genomic_DNA"/>
</dbReference>
<dbReference type="PIR" id="G70592">
    <property type="entry name" value="G70592"/>
</dbReference>
<dbReference type="RefSeq" id="WP_003416988.1">
    <property type="nucleotide sequence ID" value="NZ_KK341227.1"/>
</dbReference>
<dbReference type="SMR" id="P9WGK8"/>
<dbReference type="GeneID" id="45427239"/>
<dbReference type="KEGG" id="mtc:MT3343"/>
<dbReference type="PATRIC" id="fig|83331.31.peg.3599"/>
<dbReference type="HOGENOM" id="CLU_000445_89_18_11"/>
<dbReference type="Proteomes" id="UP000001020">
    <property type="component" value="Chromosome"/>
</dbReference>
<dbReference type="GO" id="GO:0005886">
    <property type="term" value="C:plasma membrane"/>
    <property type="evidence" value="ECO:0007669"/>
    <property type="project" value="UniProtKB-SubCell"/>
</dbReference>
<dbReference type="GO" id="GO:0005524">
    <property type="term" value="F:ATP binding"/>
    <property type="evidence" value="ECO:0007669"/>
    <property type="project" value="UniProtKB-KW"/>
</dbReference>
<dbReference type="GO" id="GO:0000155">
    <property type="term" value="F:phosphorelay sensor kinase activity"/>
    <property type="evidence" value="ECO:0007669"/>
    <property type="project" value="InterPro"/>
</dbReference>
<dbReference type="CDD" id="cd06225">
    <property type="entry name" value="HAMP"/>
    <property type="match status" value="1"/>
</dbReference>
<dbReference type="CDD" id="cd00075">
    <property type="entry name" value="HATPase"/>
    <property type="match status" value="1"/>
</dbReference>
<dbReference type="CDD" id="cd00082">
    <property type="entry name" value="HisKA"/>
    <property type="match status" value="1"/>
</dbReference>
<dbReference type="FunFam" id="1.10.287.130:FF:000010">
    <property type="entry name" value="Two-component sensor histidine kinase"/>
    <property type="match status" value="1"/>
</dbReference>
<dbReference type="FunFam" id="3.30.565.10:FF:000013">
    <property type="entry name" value="Two-component sensor histidine kinase"/>
    <property type="match status" value="1"/>
</dbReference>
<dbReference type="Gene3D" id="1.10.287.130">
    <property type="match status" value="1"/>
</dbReference>
<dbReference type="Gene3D" id="6.10.340.10">
    <property type="match status" value="1"/>
</dbReference>
<dbReference type="Gene3D" id="3.30.565.10">
    <property type="entry name" value="Histidine kinase-like ATPase, C-terminal domain"/>
    <property type="match status" value="1"/>
</dbReference>
<dbReference type="InterPro" id="IPR003660">
    <property type="entry name" value="HAMP_dom"/>
</dbReference>
<dbReference type="InterPro" id="IPR036890">
    <property type="entry name" value="HATPase_C_sf"/>
</dbReference>
<dbReference type="InterPro" id="IPR005467">
    <property type="entry name" value="His_kinase_dom"/>
</dbReference>
<dbReference type="InterPro" id="IPR003661">
    <property type="entry name" value="HisK_dim/P_dom"/>
</dbReference>
<dbReference type="InterPro" id="IPR036097">
    <property type="entry name" value="HisK_dim/P_sf"/>
</dbReference>
<dbReference type="InterPro" id="IPR047669">
    <property type="entry name" value="MtrAB_MtrB"/>
</dbReference>
<dbReference type="InterPro" id="IPR004358">
    <property type="entry name" value="Sig_transdc_His_kin-like_C"/>
</dbReference>
<dbReference type="NCBIfam" id="NF040691">
    <property type="entry name" value="MtrAB_MtrB"/>
    <property type="match status" value="1"/>
</dbReference>
<dbReference type="PANTHER" id="PTHR43547:SF2">
    <property type="entry name" value="HYBRID SIGNAL TRANSDUCTION HISTIDINE KINASE C"/>
    <property type="match status" value="1"/>
</dbReference>
<dbReference type="PANTHER" id="PTHR43547">
    <property type="entry name" value="TWO-COMPONENT HISTIDINE KINASE"/>
    <property type="match status" value="1"/>
</dbReference>
<dbReference type="Pfam" id="PF00672">
    <property type="entry name" value="HAMP"/>
    <property type="match status" value="1"/>
</dbReference>
<dbReference type="Pfam" id="PF02518">
    <property type="entry name" value="HATPase_c"/>
    <property type="match status" value="1"/>
</dbReference>
<dbReference type="Pfam" id="PF00512">
    <property type="entry name" value="HisKA"/>
    <property type="match status" value="1"/>
</dbReference>
<dbReference type="PRINTS" id="PR00344">
    <property type="entry name" value="BCTRLSENSOR"/>
</dbReference>
<dbReference type="SMART" id="SM00304">
    <property type="entry name" value="HAMP"/>
    <property type="match status" value="1"/>
</dbReference>
<dbReference type="SMART" id="SM00387">
    <property type="entry name" value="HATPase_c"/>
    <property type="match status" value="1"/>
</dbReference>
<dbReference type="SMART" id="SM00388">
    <property type="entry name" value="HisKA"/>
    <property type="match status" value="1"/>
</dbReference>
<dbReference type="SUPFAM" id="SSF55874">
    <property type="entry name" value="ATPase domain of HSP90 chaperone/DNA topoisomerase II/histidine kinase"/>
    <property type="match status" value="1"/>
</dbReference>
<dbReference type="SUPFAM" id="SSF158472">
    <property type="entry name" value="HAMP domain-like"/>
    <property type="match status" value="1"/>
</dbReference>
<dbReference type="SUPFAM" id="SSF47384">
    <property type="entry name" value="Homodimeric domain of signal transducing histidine kinase"/>
    <property type="match status" value="1"/>
</dbReference>
<dbReference type="PROSITE" id="PS50885">
    <property type="entry name" value="HAMP"/>
    <property type="match status" value="1"/>
</dbReference>
<dbReference type="PROSITE" id="PS50109">
    <property type="entry name" value="HIS_KIN"/>
    <property type="match status" value="1"/>
</dbReference>
<reference key="1">
    <citation type="journal article" date="2002" name="J. Bacteriol.">
        <title>Whole-genome comparison of Mycobacterium tuberculosis clinical and laboratory strains.</title>
        <authorList>
            <person name="Fleischmann R.D."/>
            <person name="Alland D."/>
            <person name="Eisen J.A."/>
            <person name="Carpenter L."/>
            <person name="White O."/>
            <person name="Peterson J.D."/>
            <person name="DeBoy R.T."/>
            <person name="Dodson R.J."/>
            <person name="Gwinn M.L."/>
            <person name="Haft D.H."/>
            <person name="Hickey E.K."/>
            <person name="Kolonay J.F."/>
            <person name="Nelson W.C."/>
            <person name="Umayam L.A."/>
            <person name="Ermolaeva M.D."/>
            <person name="Salzberg S.L."/>
            <person name="Delcher A."/>
            <person name="Utterback T.R."/>
            <person name="Weidman J.F."/>
            <person name="Khouri H.M."/>
            <person name="Gill J."/>
            <person name="Mikula A."/>
            <person name="Bishai W."/>
            <person name="Jacobs W.R. Jr."/>
            <person name="Venter J.C."/>
            <person name="Fraser C.M."/>
        </authorList>
    </citation>
    <scope>NUCLEOTIDE SEQUENCE [LARGE SCALE GENOMIC DNA]</scope>
    <source>
        <strain>CDC 1551 / Oshkosh</strain>
    </source>
</reference>